<protein>
    <recommendedName>
        <fullName>Lipase member I</fullName>
        <shortName>LIPI</shortName>
        <ecNumber>3.1.1.-</ecNumber>
    </recommendedName>
    <alternativeName>
        <fullName>Cancer/testis antigen 17</fullName>
        <shortName>CT17</shortName>
    </alternativeName>
    <alternativeName>
        <fullName>LPD lipase</fullName>
    </alternativeName>
    <alternativeName>
        <fullName>Membrane-associated phosphatidic acid-selective phospholipase A1-beta</fullName>
        <shortName>mPA-PLA1 beta</shortName>
    </alternativeName>
</protein>
<gene>
    <name type="primary">LIPI</name>
    <name type="synonym">LPDL</name>
    <name type="ORF">PRED5</name>
</gene>
<feature type="signal peptide" evidence="2">
    <location>
        <begin position="1"/>
        <end position="15"/>
    </location>
</feature>
<feature type="chain" id="PRO_0000042779" description="Lipase member I">
    <location>
        <begin position="16"/>
        <end position="460"/>
    </location>
</feature>
<feature type="active site" description="Nucleophile">
    <location>
        <position position="159"/>
    </location>
</feature>
<feature type="active site" description="Charge relay system" evidence="1">
    <location>
        <position position="183"/>
    </location>
</feature>
<feature type="active site" description="Charge relay system" evidence="1">
    <location>
        <position position="253"/>
    </location>
</feature>
<feature type="glycosylation site" description="N-linked (GlcNAc...) asparagine" evidence="2">
    <location>
        <position position="63"/>
    </location>
</feature>
<feature type="glycosylation site" description="N-linked (GlcNAc...) asparagine" evidence="2">
    <location>
        <position position="396"/>
    </location>
</feature>
<feature type="disulfide bond" evidence="1">
    <location>
        <begin position="238"/>
        <end position="251"/>
    </location>
</feature>
<feature type="disulfide bond" evidence="1">
    <location>
        <begin position="275"/>
        <end position="286"/>
    </location>
</feature>
<feature type="disulfide bond" evidence="1">
    <location>
        <begin position="289"/>
        <end position="297"/>
    </location>
</feature>
<feature type="disulfide bond" evidence="1">
    <location>
        <begin position="436"/>
        <end position="455"/>
    </location>
</feature>
<feature type="splice variant" id="VSP_016090" description="In isoform 2." evidence="5">
    <original>MRVYIFLCLMCWV</original>
    <variation>MLLKCLHNNLCQKYSAHAFQFSPRNVLWLLVVCL</variation>
    <location>
        <begin position="1"/>
        <end position="13"/>
    </location>
</feature>
<feature type="splice variant" id="VSP_053896" description="In isoform 8." evidence="6">
    <location>
        <begin position="16"/>
        <end position="180"/>
    </location>
</feature>
<feature type="splice variant" id="VSP_053897" description="In isoform 5." evidence="6">
    <location>
        <begin position="215"/>
        <end position="244"/>
    </location>
</feature>
<feature type="splice variant" id="VSP_053898" description="In isoform 4." evidence="6">
    <location>
        <begin position="245"/>
        <end position="279"/>
    </location>
</feature>
<feature type="splice variant" id="VSP_053899" description="In isoform 3." evidence="6">
    <original>GTYPFCT</original>
    <variation>A</variation>
    <location>
        <begin position="330"/>
        <end position="336"/>
    </location>
</feature>
<feature type="splice variant" id="VSP_053900" description="In isoform 6." evidence="6">
    <original>TYYFVLSIIVPDKTMMDGSFSFKLLNQLGMIEEPRLYEKN</original>
    <variation>NHHFAGIILYLKNERKCFLIQTHVHQRTHKMPSSIKCTCL</variation>
    <location>
        <begin position="336"/>
        <end position="375"/>
    </location>
</feature>
<feature type="splice variant" id="VSP_053901" description="In isoform 7." evidence="6">
    <original>TYYFVLSIIVPDKTMMDGSFSFKLLNQLGMIEE</original>
    <variation>NKPVFRIYLFNTSPYPLLAGRLFHLSCLRVVKN</variation>
    <location>
        <begin position="336"/>
        <end position="368"/>
    </location>
</feature>
<feature type="splice variant" id="VSP_053902" description="In isoform 7." evidence="6">
    <location>
        <begin position="369"/>
        <end position="460"/>
    </location>
</feature>
<feature type="splice variant" id="VSP_053903" description="In isoform 6." evidence="6">
    <location>
        <begin position="376"/>
        <end position="460"/>
    </location>
</feature>
<feature type="sequence variant" id="VAR_023760" description="In dbSNP:rs11909217." evidence="3">
    <original>C</original>
    <variation>Y</variation>
    <location>
        <position position="55"/>
    </location>
</feature>
<feature type="sequence variant" id="VAR_023761" description="In dbSNP:rs74369337." evidence="3">
    <original>G</original>
    <variation>E</variation>
    <location>
        <position position="364"/>
    </location>
</feature>
<feature type="sequence variant" id="VAR_023762" description="In dbSNP:rs2822432." evidence="3">
    <original>E</original>
    <variation>K</variation>
    <location>
        <position position="431"/>
    </location>
</feature>
<feature type="sequence variant" id="VAR_023763" description="In dbSNP:rs7278737." evidence="3">
    <original>D</original>
    <variation>E</variation>
    <location>
        <position position="444"/>
    </location>
</feature>
<feature type="mutagenesis site" description="No activity." evidence="4">
    <original>S</original>
    <variation>A</variation>
    <location>
        <position position="159"/>
    </location>
</feature>
<feature type="sequence conflict" description="In Ref. 1; AAP37476." ref="1">
    <original>S</original>
    <variation>R</variation>
    <location>
        <position position="421"/>
    </location>
</feature>
<evidence type="ECO:0000250" key="1"/>
<evidence type="ECO:0000255" key="2"/>
<evidence type="ECO:0000269" key="3">
    <source>
    </source>
</evidence>
<evidence type="ECO:0000269" key="4">
    <source>
    </source>
</evidence>
<evidence type="ECO:0000303" key="5">
    <source>
    </source>
</evidence>
<evidence type="ECO:0000303" key="6">
    <source>
    </source>
</evidence>
<evidence type="ECO:0000305" key="7"/>
<evidence type="ECO:0000305" key="8">
    <source>
    </source>
</evidence>
<name>LIPI_HUMAN</name>
<accession>Q6XZB0</accession>
<accession>G1JSG3</accession>
<accession>G1JSG4</accession>
<accession>G1JSG5</accession>
<accession>G1JSG6</accession>
<accession>G1JSG7</accession>
<accession>G1JSG8</accession>
<accession>G1JSG9</accession>
<sequence>MRVYIFLCLMCWVRSDNKRPCLEFSQLSVKDSFRDLFIPRIETILMMYTRNNLNCAEPLFEQNNSLNVNFNTQKKTVWLIHGYRPVGSIPLWLQNFVRILLNEEDMNVIVVDWSRGATTFIYNRAVKNTRKVAVSLSVHIKNLLKHGASLDNFHFIGVSLGAHISGFVGKIFHGQLGRITGLDPAGPRFSRKPPYSRLDYTDAKFVDVIHSDSNGLGIQEPLGHIDFYPNGGNKQPGCPKSIFSGIQFIKCNHQRAVHLFMASLETNCNFISFPCRSYKDYKTSLCVDCDCFKEKSCPRLGYQAKLFKGVLKERMEGRPLRTTVFLDTSGTYPFCTYYFVLSIIVPDKTMMDGSFSFKLLNQLGMIEEPRLYEKNKPFYKLQEVKILAQFYNDFVNISSIGLTYFQSSNLQCSTCTYKIQSLMLKSLTYPERPPLCRYNIVLKDREEVFLNPNTCTPKNT</sequence>
<comment type="function">
    <text evidence="4">Hydrolyzes specifically phosphatidic acid (PA) to produce 2-acyl lysophosphatidic acid (LPA; a potent bioactive lipid mediator) and fatty acid. Does not hydrolyze other phospholipids, like phosphatidylserine (PS), phosphatidylcholine (PC) and phosphatidylethanolamine (PE) or triacylglycerol (TG).</text>
</comment>
<comment type="catalytic activity">
    <reaction evidence="4">
        <text>1-hexadecanoyl-2-(9Z-octadecenoyl)-sn-glycero-3-phosphate + H2O = 2-(9Z-octadecenoyl)-sn-glycero-3-phosphate + hexadecanoate + H(+)</text>
        <dbReference type="Rhea" id="RHEA:40943"/>
        <dbReference type="ChEBI" id="CHEBI:7896"/>
        <dbReference type="ChEBI" id="CHEBI:15377"/>
        <dbReference type="ChEBI" id="CHEBI:15378"/>
        <dbReference type="ChEBI" id="CHEBI:64839"/>
        <dbReference type="ChEBI" id="CHEBI:77593"/>
    </reaction>
    <physiologicalReaction direction="left-to-right" evidence="8">
        <dbReference type="Rhea" id="RHEA:40944"/>
    </physiologicalReaction>
</comment>
<comment type="activity regulation">
    <text evidence="4">Inhibited by sodium vanadate.</text>
</comment>
<comment type="subunit">
    <text evidence="4">Interacts with heparin with a high affinity.</text>
</comment>
<comment type="subcellular location">
    <molecule>Isoform 1</molecule>
    <subcellularLocation>
        <location evidence="4">Cell membrane</location>
    </subcellularLocation>
    <subcellularLocation>
        <location evidence="4">Secreted</location>
    </subcellularLocation>
    <text evidence="4">May associate with lipid draft.</text>
</comment>
<comment type="subcellular location">
    <molecule>Isoform 2</molecule>
    <subcellularLocation>
        <location evidence="4">Cell membrane</location>
    </subcellularLocation>
    <subcellularLocation>
        <location evidence="4">Secreted</location>
    </subcellularLocation>
    <text evidence="4">May associate with lipid draft.</text>
</comment>
<comment type="alternative products">
    <event type="alternative splicing"/>
    <isoform>
        <id>Q6XZB0-1</id>
        <name>1</name>
        <name evidence="5">mPA-PLA1beta</name>
        <sequence type="displayed"/>
    </isoform>
    <isoform>
        <id>Q6XZB0-2</id>
        <name>2</name>
        <name evidence="5">mPA-PLA1alpha</name>
        <sequence type="described" ref="VSP_016090"/>
    </isoform>
    <isoform>
        <id>Q6XZB0-3</id>
        <name>3</name>
        <name>deltaE7.2</name>
        <sequence type="described" ref="VSP_053899"/>
    </isoform>
    <isoform>
        <id>Q6XZB0-4</id>
        <name>4</name>
        <name>deltaE6.1</name>
        <sequence type="described" ref="VSP_053898"/>
    </isoform>
    <isoform>
        <id>Q6XZB0-5</id>
        <name>5</name>
        <name>deltaE5</name>
        <sequence type="described" ref="VSP_053897"/>
    </isoform>
    <isoform>
        <id>Q6XZB0-6</id>
        <name>6</name>
        <name>deltaE8-9</name>
        <sequence type="described" ref="VSP_053900 VSP_053903"/>
    </isoform>
    <isoform>
        <id>Q6XZB0-7</id>
        <name>7</name>
        <name>7B+</name>
        <sequence type="described" ref="VSP_053901 VSP_053902"/>
    </isoform>
    <isoform>
        <id>Q6XZB0-8</id>
        <name>8</name>
        <name>deltaE2-3</name>
        <sequence type="described" ref="VSP_053896"/>
    </isoform>
</comment>
<comment type="tissue specificity">
    <text evidence="3 4">Expressed in testis. Expressed exclusively at the connecting piece of the sperm.</text>
</comment>
<comment type="similarity">
    <text evidence="7">Belongs to the AB hydrolase superfamily. Lipase family.</text>
</comment>
<proteinExistence type="evidence at protein level"/>
<organism>
    <name type="scientific">Homo sapiens</name>
    <name type="common">Human</name>
    <dbReference type="NCBI Taxonomy" id="9606"/>
    <lineage>
        <taxon>Eukaryota</taxon>
        <taxon>Metazoa</taxon>
        <taxon>Chordata</taxon>
        <taxon>Craniata</taxon>
        <taxon>Vertebrata</taxon>
        <taxon>Euteleostomi</taxon>
        <taxon>Mammalia</taxon>
        <taxon>Eutheria</taxon>
        <taxon>Euarchontoglires</taxon>
        <taxon>Primates</taxon>
        <taxon>Haplorrhini</taxon>
        <taxon>Catarrhini</taxon>
        <taxon>Hominidae</taxon>
        <taxon>Homo</taxon>
    </lineage>
</organism>
<dbReference type="EC" id="3.1.1.-"/>
<dbReference type="EMBL" id="AY197607">
    <property type="protein sequence ID" value="AAP37476.1"/>
    <property type="molecule type" value="mRNA"/>
</dbReference>
<dbReference type="EMBL" id="JN387910">
    <property type="protein sequence ID" value="AEL12688.1"/>
    <property type="molecule type" value="mRNA"/>
</dbReference>
<dbReference type="EMBL" id="JN387911">
    <property type="protein sequence ID" value="AEL12689.1"/>
    <property type="molecule type" value="mRNA"/>
</dbReference>
<dbReference type="EMBL" id="JN387912">
    <property type="protein sequence ID" value="AEL12690.1"/>
    <property type="molecule type" value="mRNA"/>
</dbReference>
<dbReference type="EMBL" id="JN387913">
    <property type="protein sequence ID" value="AEL12691.1"/>
    <property type="molecule type" value="mRNA"/>
</dbReference>
<dbReference type="EMBL" id="JN387914">
    <property type="protein sequence ID" value="AEL12692.1"/>
    <property type="molecule type" value="mRNA"/>
</dbReference>
<dbReference type="EMBL" id="JN387915">
    <property type="protein sequence ID" value="AEL12693.1"/>
    <property type="molecule type" value="mRNA"/>
</dbReference>
<dbReference type="EMBL" id="JN387916">
    <property type="protein sequence ID" value="AEL12694.1"/>
    <property type="molecule type" value="mRNA"/>
</dbReference>
<dbReference type="EMBL" id="AF130358">
    <property type="status" value="NOT_ANNOTATED_CDS"/>
    <property type="molecule type" value="Genomic_DNA"/>
</dbReference>
<dbReference type="EMBL" id="AL078615">
    <property type="status" value="NOT_ANNOTATED_CDS"/>
    <property type="molecule type" value="Genomic_DNA"/>
</dbReference>
<dbReference type="EMBL" id="AP001347">
    <property type="status" value="NOT_ANNOTATED_CDS"/>
    <property type="molecule type" value="Genomic_DNA"/>
</dbReference>
<dbReference type="CCDS" id="CCDS93076.1">
    <molecule id="Q6XZB0-8"/>
</dbReference>
<dbReference type="CCDS" id="CCDS93077.1">
    <molecule id="Q6XZB0-5"/>
</dbReference>
<dbReference type="CCDS" id="CCDS93078.1">
    <molecule id="Q6XZB0-4"/>
</dbReference>
<dbReference type="CCDS" id="CCDS93079.1">
    <molecule id="Q6XZB0-6"/>
</dbReference>
<dbReference type="CCDS" id="CCDS93080.1">
    <molecule id="Q6XZB0-1"/>
</dbReference>
<dbReference type="CCDS" id="CCDS93081.1">
    <molecule id="Q6XZB0-3"/>
</dbReference>
<dbReference type="RefSeq" id="NP_001289927.1">
    <molecule id="Q6XZB0-1"/>
    <property type="nucleotide sequence ID" value="NM_001302998.2"/>
</dbReference>
<dbReference type="RefSeq" id="NP_001289928.1">
    <molecule id="Q6XZB0-5"/>
    <property type="nucleotide sequence ID" value="NM_001302999.2"/>
</dbReference>
<dbReference type="RefSeq" id="NP_001289929.1">
    <molecule id="Q6XZB0-3"/>
    <property type="nucleotide sequence ID" value="NM_001303000.2"/>
</dbReference>
<dbReference type="RefSeq" id="NP_001289930.1">
    <property type="nucleotide sequence ID" value="NM_001303001.1"/>
</dbReference>
<dbReference type="RefSeq" id="NP_001366494.1">
    <molecule id="Q6XZB0-4"/>
    <property type="nucleotide sequence ID" value="NM_001379565.1"/>
</dbReference>
<dbReference type="RefSeq" id="NP_001366495.1">
    <molecule id="Q6XZB0-8"/>
    <property type="nucleotide sequence ID" value="NM_001379566.1"/>
</dbReference>
<dbReference type="RefSeq" id="NP_945347.2">
    <property type="nucleotide sequence ID" value="NM_198996.3"/>
</dbReference>
<dbReference type="SMR" id="Q6XZB0"/>
<dbReference type="BioGRID" id="127254">
    <property type="interactions" value="2"/>
</dbReference>
<dbReference type="FunCoup" id="Q6XZB0">
    <property type="interactions" value="12"/>
</dbReference>
<dbReference type="STRING" id="9606.ENSP00000343331"/>
<dbReference type="SwissLipids" id="SLP:000000626"/>
<dbReference type="ESTHER" id="human-LIPI">
    <property type="family name" value="Phospholipase"/>
</dbReference>
<dbReference type="GlyCosmos" id="Q6XZB0">
    <property type="glycosylation" value="2 sites, No reported glycans"/>
</dbReference>
<dbReference type="GlyGen" id="Q6XZB0">
    <property type="glycosylation" value="2 sites"/>
</dbReference>
<dbReference type="iPTMnet" id="Q6XZB0"/>
<dbReference type="PhosphoSitePlus" id="Q6XZB0"/>
<dbReference type="BioMuta" id="LIPI"/>
<dbReference type="DMDM" id="81170675"/>
<dbReference type="jPOST" id="Q6XZB0"/>
<dbReference type="MassIVE" id="Q6XZB0"/>
<dbReference type="PaxDb" id="9606-ENSP00000343331"/>
<dbReference type="PeptideAtlas" id="Q6XZB0"/>
<dbReference type="ProteomicsDB" id="67826">
    <molecule id="Q6XZB0-1"/>
</dbReference>
<dbReference type="ProteomicsDB" id="67827">
    <molecule id="Q6XZB0-2"/>
</dbReference>
<dbReference type="Antibodypedia" id="22161">
    <property type="antibodies" value="101 antibodies from 26 providers"/>
</dbReference>
<dbReference type="DNASU" id="149998"/>
<dbReference type="Ensembl" id="ENST00000536861.6">
    <molecule id="Q6XZB0-3"/>
    <property type="protein sequence ID" value="ENSP00000440381.3"/>
    <property type="gene ID" value="ENSG00000188992.12"/>
</dbReference>
<dbReference type="Ensembl" id="ENST00000614229.5">
    <molecule id="Q6XZB0-5"/>
    <property type="protein sequence ID" value="ENSP00000482652.2"/>
    <property type="gene ID" value="ENSG00000188992.12"/>
</dbReference>
<dbReference type="Ensembl" id="ENST00000679868.1">
    <molecule id="Q6XZB0-8"/>
    <property type="protein sequence ID" value="ENSP00000506458.1"/>
    <property type="gene ID" value="ENSG00000188992.12"/>
</dbReference>
<dbReference type="Ensembl" id="ENST00000680487.1">
    <molecule id="Q6XZB0-7"/>
    <property type="protein sequence ID" value="ENSP00000506194.1"/>
    <property type="gene ID" value="ENSG00000188992.12"/>
</dbReference>
<dbReference type="Ensembl" id="ENST00000680801.1">
    <molecule id="Q6XZB0-4"/>
    <property type="protein sequence ID" value="ENSP00000505904.1"/>
    <property type="gene ID" value="ENSG00000188992.12"/>
</dbReference>
<dbReference type="Ensembl" id="ENST00000681601.1">
    <molecule id="Q6XZB0-1"/>
    <property type="protein sequence ID" value="ENSP00000505323.1"/>
    <property type="gene ID" value="ENSG00000188992.12"/>
</dbReference>
<dbReference type="GeneID" id="149998"/>
<dbReference type="KEGG" id="hsa:149998"/>
<dbReference type="MANE-Select" id="ENST00000681601.1">
    <property type="protein sequence ID" value="ENSP00000505323.1"/>
    <property type="RefSeq nucleotide sequence ID" value="NM_001302998.2"/>
    <property type="RefSeq protein sequence ID" value="NP_001289927.1"/>
</dbReference>
<dbReference type="UCSC" id="uc002yjm.4">
    <molecule id="Q6XZB0-1"/>
    <property type="organism name" value="human"/>
</dbReference>
<dbReference type="AGR" id="HGNC:18821"/>
<dbReference type="CTD" id="149998"/>
<dbReference type="DisGeNET" id="149998"/>
<dbReference type="GeneCards" id="LIPI"/>
<dbReference type="HGNC" id="HGNC:18821">
    <property type="gene designation" value="LIPI"/>
</dbReference>
<dbReference type="HPA" id="ENSG00000188992">
    <property type="expression patterns" value="Tissue enriched (epididymis)"/>
</dbReference>
<dbReference type="MalaCards" id="LIPI"/>
<dbReference type="MIM" id="609252">
    <property type="type" value="gene"/>
</dbReference>
<dbReference type="neXtProt" id="NX_Q6XZB0"/>
<dbReference type="OpenTargets" id="ENSG00000188992"/>
<dbReference type="PharmGKB" id="PA38695"/>
<dbReference type="VEuPathDB" id="HostDB:ENSG00000188992"/>
<dbReference type="eggNOG" id="ENOG502QUQT">
    <property type="taxonomic scope" value="Eukaryota"/>
</dbReference>
<dbReference type="GeneTree" id="ENSGT00940000161940"/>
<dbReference type="HOGENOM" id="CLU_027171_3_0_1"/>
<dbReference type="InParanoid" id="Q6XZB0"/>
<dbReference type="OMA" id="CAYYFVL"/>
<dbReference type="OrthoDB" id="199913at2759"/>
<dbReference type="PAN-GO" id="Q6XZB0">
    <property type="GO annotations" value="5 GO annotations based on evolutionary models"/>
</dbReference>
<dbReference type="PhylomeDB" id="Q6XZB0"/>
<dbReference type="TreeFam" id="TF324997"/>
<dbReference type="BRENDA" id="3.1.1.111">
    <property type="organism ID" value="2681"/>
</dbReference>
<dbReference type="BRENDA" id="3.1.1.32">
    <property type="organism ID" value="2681"/>
</dbReference>
<dbReference type="PathwayCommons" id="Q6XZB0"/>
<dbReference type="Reactome" id="R-HSA-1483166">
    <property type="pathway name" value="Synthesis of PA"/>
</dbReference>
<dbReference type="BioGRID-ORCS" id="149998">
    <property type="hits" value="3 hits in 1144 CRISPR screens"/>
</dbReference>
<dbReference type="ChiTaRS" id="LIPI">
    <property type="organism name" value="human"/>
</dbReference>
<dbReference type="GenomeRNAi" id="149998"/>
<dbReference type="Pharos" id="Q6XZB0">
    <property type="development level" value="Tbio"/>
</dbReference>
<dbReference type="PRO" id="PR:Q6XZB0"/>
<dbReference type="Proteomes" id="UP000005640">
    <property type="component" value="Chromosome 21"/>
</dbReference>
<dbReference type="RNAct" id="Q6XZB0">
    <property type="molecule type" value="protein"/>
</dbReference>
<dbReference type="Bgee" id="ENSG00000188992">
    <property type="expression patterns" value="Expressed in corpus epididymis and 72 other cell types or tissues"/>
</dbReference>
<dbReference type="ExpressionAtlas" id="Q6XZB0">
    <property type="expression patterns" value="baseline and differential"/>
</dbReference>
<dbReference type="GO" id="GO:0005615">
    <property type="term" value="C:extracellular space"/>
    <property type="evidence" value="ECO:0000314"/>
    <property type="project" value="UniProtKB"/>
</dbReference>
<dbReference type="GO" id="GO:0005886">
    <property type="term" value="C:plasma membrane"/>
    <property type="evidence" value="ECO:0000314"/>
    <property type="project" value="UniProtKB"/>
</dbReference>
<dbReference type="GO" id="GO:0052689">
    <property type="term" value="F:carboxylic ester hydrolase activity"/>
    <property type="evidence" value="ECO:0007669"/>
    <property type="project" value="InterPro"/>
</dbReference>
<dbReference type="GO" id="GO:0008201">
    <property type="term" value="F:heparin binding"/>
    <property type="evidence" value="ECO:0000314"/>
    <property type="project" value="UniProtKB"/>
</dbReference>
<dbReference type="GO" id="GO:0004620">
    <property type="term" value="F:phospholipase activity"/>
    <property type="evidence" value="ECO:0000314"/>
    <property type="project" value="UniProtKB"/>
</dbReference>
<dbReference type="GO" id="GO:0016042">
    <property type="term" value="P:lipid catabolic process"/>
    <property type="evidence" value="ECO:0000314"/>
    <property type="project" value="UniProtKB"/>
</dbReference>
<dbReference type="GO" id="GO:0006654">
    <property type="term" value="P:phosphatidic acid biosynthetic process"/>
    <property type="evidence" value="ECO:0000304"/>
    <property type="project" value="Reactome"/>
</dbReference>
<dbReference type="CDD" id="cd00707">
    <property type="entry name" value="Pancreat_lipase_like"/>
    <property type="match status" value="1"/>
</dbReference>
<dbReference type="FunFam" id="3.40.50.1820:FF:000063">
    <property type="entry name" value="Lipase member H"/>
    <property type="match status" value="1"/>
</dbReference>
<dbReference type="Gene3D" id="3.40.50.1820">
    <property type="entry name" value="alpha/beta hydrolase"/>
    <property type="match status" value="1"/>
</dbReference>
<dbReference type="InterPro" id="IPR029058">
    <property type="entry name" value="AB_hydrolase_fold"/>
</dbReference>
<dbReference type="InterPro" id="IPR013818">
    <property type="entry name" value="Lipase"/>
</dbReference>
<dbReference type="InterPro" id="IPR016272">
    <property type="entry name" value="Lipase_LIPH"/>
</dbReference>
<dbReference type="InterPro" id="IPR033906">
    <property type="entry name" value="Lipase_N"/>
</dbReference>
<dbReference type="InterPro" id="IPR000734">
    <property type="entry name" value="TAG_lipase"/>
</dbReference>
<dbReference type="PANTHER" id="PTHR11610">
    <property type="entry name" value="LIPASE"/>
    <property type="match status" value="1"/>
</dbReference>
<dbReference type="PANTHER" id="PTHR11610:SF103">
    <property type="entry name" value="LIPASE MEMBER I"/>
    <property type="match status" value="1"/>
</dbReference>
<dbReference type="Pfam" id="PF00151">
    <property type="entry name" value="Lipase"/>
    <property type="match status" value="1"/>
</dbReference>
<dbReference type="PIRSF" id="PIRSF000865">
    <property type="entry name" value="Lipoprotein_lipase_LIPH"/>
    <property type="match status" value="1"/>
</dbReference>
<dbReference type="PRINTS" id="PR00821">
    <property type="entry name" value="TAGLIPASE"/>
</dbReference>
<dbReference type="SUPFAM" id="SSF53474">
    <property type="entry name" value="alpha/beta-Hydrolases"/>
    <property type="match status" value="1"/>
</dbReference>
<keyword id="KW-0025">Alternative splicing</keyword>
<keyword id="KW-1003">Cell membrane</keyword>
<keyword id="KW-1015">Disulfide bond</keyword>
<keyword id="KW-0325">Glycoprotein</keyword>
<keyword id="KW-0358">Heparin-binding</keyword>
<keyword id="KW-0378">Hydrolase</keyword>
<keyword id="KW-0442">Lipid degradation</keyword>
<keyword id="KW-0443">Lipid metabolism</keyword>
<keyword id="KW-0472">Membrane</keyword>
<keyword id="KW-1267">Proteomics identification</keyword>
<keyword id="KW-1185">Reference proteome</keyword>
<keyword id="KW-0964">Secreted</keyword>
<keyword id="KW-0732">Signal</keyword>
<reference key="1">
    <citation type="journal article" date="2003" name="J. Biol. Chem.">
        <title>Biochemical and molecular characterization of two phosphatidic acid-selective phospholipase A1s, mPA-PLA1alpha and mPA-PLA1beta.</title>
        <authorList>
            <person name="Hiramatsu T."/>
            <person name="Sonoda H."/>
            <person name="Takanezawa Y."/>
            <person name="Morikawa R."/>
            <person name="Ishida M."/>
            <person name="Kasahara K."/>
            <person name="Sanai Y."/>
            <person name="Taguchi R."/>
            <person name="Aoki J."/>
            <person name="Arai H."/>
        </authorList>
    </citation>
    <scope>NUCLEOTIDE SEQUENCE [MRNA] (ISOFORMS 1 AND 2)</scope>
    <scope>FUNCTION</scope>
    <scope>ACTIVITY REGULATION</scope>
    <scope>SUBCELLULAR LOCATION</scope>
    <scope>TISSUE SPECIFICITY</scope>
    <scope>MUTAGENESIS OF SER-159</scope>
</reference>
<reference key="2">
    <citation type="journal article" date="2003" name="Hum. Mol. Genet.">
        <title>Identification of a novel lipase gene mutated in lpd mice with hypertriglyceridemia and associated with dyslipidemia in humans.</title>
        <authorList>
            <person name="Wen X.-Y."/>
            <person name="Hegele R.A."/>
            <person name="Wang J."/>
            <person name="Wang D.Y."/>
            <person name="Cheung J."/>
            <person name="Wilson M."/>
            <person name="Yahyapour M."/>
            <person name="Bai Y."/>
            <person name="Zhuang L."/>
            <person name="Skaug J."/>
            <person name="Young T.K."/>
            <person name="Connelly P.W."/>
            <person name="Koop B.F."/>
            <person name="Tsui L.-C."/>
            <person name="Stewart A.K."/>
        </authorList>
    </citation>
    <scope>NUCLEOTIDE SEQUENCE [MRNA] (ISOFORM 1)</scope>
    <scope>TISSUE SPECIFICITY</scope>
    <scope>VARIANTS TYR-55; GLU-364; LYS-431 AND GLU-444</scope>
</reference>
<reference key="3">
    <citation type="journal article" date="2011" name="Mol. Biol. Rep.">
        <title>Expression of multiple membrane-associated phospholipase A1 beta transcript variants and lysophosphatidic acid receptors in Ewing tumor cells.</title>
        <authorList>
            <person name="Schmiedel B.J."/>
            <person name="Hutter C."/>
            <person name="Hesse M."/>
            <person name="Staege M.S."/>
        </authorList>
    </citation>
    <scope>NUCLEOTIDE SEQUENCE [MRNA] (ISOFORMS 1; 3; 4; 5; 6; 7 AND 8)</scope>
    <scope>ALTERNATIVE SPLICING</scope>
</reference>
<reference key="4">
    <citation type="journal article" date="2000" name="Nature">
        <title>The DNA sequence of human chromosome 21.</title>
        <authorList>
            <person name="Hattori M."/>
            <person name="Fujiyama A."/>
            <person name="Taylor T.D."/>
            <person name="Watanabe H."/>
            <person name="Yada T."/>
            <person name="Park H.-S."/>
            <person name="Toyoda A."/>
            <person name="Ishii K."/>
            <person name="Totoki Y."/>
            <person name="Choi D.-K."/>
            <person name="Groner Y."/>
            <person name="Soeda E."/>
            <person name="Ohki M."/>
            <person name="Takagi T."/>
            <person name="Sakaki Y."/>
            <person name="Taudien S."/>
            <person name="Blechschmidt K."/>
            <person name="Polley A."/>
            <person name="Menzel U."/>
            <person name="Delabar J."/>
            <person name="Kumpf K."/>
            <person name="Lehmann R."/>
            <person name="Patterson D."/>
            <person name="Reichwald K."/>
            <person name="Rump A."/>
            <person name="Schillhabel M."/>
            <person name="Schudy A."/>
            <person name="Zimmermann W."/>
            <person name="Rosenthal A."/>
            <person name="Kudoh J."/>
            <person name="Shibuya K."/>
            <person name="Kawasaki K."/>
            <person name="Asakawa S."/>
            <person name="Shintani A."/>
            <person name="Sasaki T."/>
            <person name="Nagamine K."/>
            <person name="Mitsuyama S."/>
            <person name="Antonarakis S.E."/>
            <person name="Minoshima S."/>
            <person name="Shimizu N."/>
            <person name="Nordsiek G."/>
            <person name="Hornischer K."/>
            <person name="Brandt P."/>
            <person name="Scharfe M."/>
            <person name="Schoen O."/>
            <person name="Desario A."/>
            <person name="Reichelt J."/>
            <person name="Kauer G."/>
            <person name="Bloecker H."/>
            <person name="Ramser J."/>
            <person name="Beck A."/>
            <person name="Klages S."/>
            <person name="Hennig S."/>
            <person name="Riesselmann L."/>
            <person name="Dagand E."/>
            <person name="Wehrmeyer S."/>
            <person name="Borzym K."/>
            <person name="Gardiner K."/>
            <person name="Nizetic D."/>
            <person name="Francis F."/>
            <person name="Lehrach H."/>
            <person name="Reinhardt R."/>
            <person name="Yaspo M.-L."/>
        </authorList>
    </citation>
    <scope>NUCLEOTIDE SEQUENCE [LARGE SCALE GENOMIC DNA]</scope>
</reference>